<reference key="1">
    <citation type="journal article" date="2015" name="Genome Announc.">
        <title>Genome sequence of Aspergillus flavus NRRL 3357, a strain that causes aflatoxin contamination of food and feed.</title>
        <authorList>
            <person name="Nierman W.C."/>
            <person name="Yu J."/>
            <person name="Fedorova-Abrams N.D."/>
            <person name="Losada L."/>
            <person name="Cleveland T.E."/>
            <person name="Bhatnagar D."/>
            <person name="Bennett J.W."/>
            <person name="Dean R."/>
            <person name="Payne G.A."/>
        </authorList>
    </citation>
    <scope>NUCLEOTIDE SEQUENCE [LARGE SCALE GENOMIC DNA]</scope>
    <source>
        <strain>ATCC 200026 / FGSC A1120 / IAM 13836 / NRRL 3357 / JCM 12722 / SRRC 167</strain>
    </source>
</reference>
<reference key="2">
    <citation type="submission" date="2020-07" db="EMBL/GenBank/DDBJ databases">
        <title>Two new chromosome-level Aspergillus flavus reference genomes reveal a large insertion potentially contributing to isolate stress tolerance and aflatoxin production.</title>
        <authorList>
            <person name="Fountain J.C."/>
            <person name="Clevenger J.P."/>
            <person name="Nadon B."/>
            <person name="Youngblood R.C."/>
            <person name="Korani W."/>
            <person name="Chang P.-K."/>
            <person name="Starr D."/>
            <person name="Wang H."/>
            <person name="Isett B."/>
            <person name="Johnston H.R."/>
            <person name="Wiggins R."/>
            <person name="Chu Y."/>
            <person name="Agarwal G."/>
            <person name="Kemerait R.C."/>
            <person name="Pandey M.K."/>
            <person name="Bhatnagar D."/>
            <person name="Ozias-Akins P."/>
            <person name="Varshney R.K."/>
            <person name="Scheffler B.E."/>
            <person name="Vaughn J.N."/>
            <person name="Guo B."/>
        </authorList>
    </citation>
    <scope>NUCLEOTIDE SEQUENCE [LARGE SCALE GENOMIC DNA]</scope>
    <source>
        <strain>ATCC 200026 / FGSC A1120 / IAM 13836 / NRRL 3357 / JCM 12722 / SRRC 167</strain>
    </source>
</reference>
<reference key="3">
    <citation type="journal article" date="2020" name="J. Am. Chem. Soc.">
        <title>Genome mining of alkaloidal terpenoids from a hybrid terpene and nonribosomal peptide biosynthetic pathway.</title>
        <authorList>
            <person name="Yee D.A."/>
            <person name="Kakule T.B."/>
            <person name="Cheng W."/>
            <person name="Chen M."/>
            <person name="Chong C.T.Y."/>
            <person name="Hai Y."/>
            <person name="Hang L.F."/>
            <person name="Hung Y.S."/>
            <person name="Liu N."/>
            <person name="Ohashi M."/>
            <person name="Okorafor I.C."/>
            <person name="Song Y."/>
            <person name="Tang M."/>
            <person name="Zhang Z."/>
            <person name="Tang Y."/>
        </authorList>
    </citation>
    <scope>FUNCTION</scope>
    <scope>CATALYTIC ACTIVITY</scope>
    <scope>PATHWAY</scope>
</reference>
<evidence type="ECO:0000255" key="1">
    <source>
        <dbReference type="PROSITE-ProRule" id="PRU00155"/>
    </source>
</evidence>
<evidence type="ECO:0000269" key="2">
    <source>
    </source>
</evidence>
<evidence type="ECO:0000303" key="3">
    <source>
    </source>
</evidence>
<evidence type="ECO:0000305" key="4"/>
<keyword id="KW-0479">Metal-binding</keyword>
<keyword id="KW-0489">Methyltransferase</keyword>
<keyword id="KW-0808">Transferase</keyword>
<keyword id="KW-0862">Zinc</keyword>
<comment type="function">
    <text evidence="2">Methyltransferase; part of the gene cluster that mediates the biosynthesis of flavunoidine, an alkaloidal terpenoid with a tetracyclic cage-like core connected to dimethylcadaverine via a C-N bond and acylated with 5,5-dimethyl-L-pipecolate (PubMed:31885262). The tetracyclic core is synthesized by the terpene cyclase flvE and the cytochrome P450 monooxygenase flvD (PubMed:31885262). The terpene cyclase flvE catalyzes the cyclization of farnesyl pyrophosphate (FPP) to form (1R,4R,5S)-(+)-acoradiene and the cytochrome P450 monooxygenase flvD is then responsible for oxidative conversion of (1R,4R,5S)-(+)-acoradiene into the tetracyclic cage present in the final product flavunoidine (PubMed:31885262). In parallel, the N-methyltransferase flvH dimethylates L-lysine to give N,N-dimethyl-L-Lysin which is decarboxylated by flvG to afford dimethylcadaverine (PubMed:31885262). The terpene cyclase-like protein flvF is the enzyme that attaches the dimethylcadaverine precusor at the C-7 of the tetracyclic cage to yield pre-flavunoidine (PubMed:31885262). The cytochrome monooxygenase flvC hydroxylates the C-10 position of pre-flavunoidine whereas the NRPS flvI acylates the terpenoid core at the hydroxylated C-10 with dimethylpipecolate to yield final flavunoidine (PubMed:31885262). The bifunctional enzyme flvA and the dehydrogenase flvB are responsible for the synthesis of the dimethylpipecolate precursor (PubMed:31885262). The PLP-dependent lyase domain of flvA might use L-O-acetyl-homoserine and alpha-keto-isovalerate to form an intermediary ketone that can cyclize intramolecularly to yield an imine (PubMed:31885262). The imine can be reduced by flvB to yield the 6-carboxylated pipecolate (PubMed:31885262). The C-terminal alpha-KG-dependent oxygenase domain of flvA is then proposed to catalyze the decarboxylation to yield dimethylpipecolate (PubMed:31885262).</text>
</comment>
<comment type="catalytic activity">
    <reaction evidence="2">
        <text>L-lysine + 2 S-adenosyl-L-methionine = N(6),N(6)-dimethyl-L-lysine + 2 S-adenosyl-L-homocysteine + 2 H(+)</text>
        <dbReference type="Rhea" id="RHEA:74523"/>
        <dbReference type="ChEBI" id="CHEBI:15378"/>
        <dbReference type="ChEBI" id="CHEBI:32551"/>
        <dbReference type="ChEBI" id="CHEBI:57856"/>
        <dbReference type="ChEBI" id="CHEBI:59789"/>
        <dbReference type="ChEBI" id="CHEBI:193107"/>
    </reaction>
    <physiologicalReaction direction="left-to-right" evidence="2">
        <dbReference type="Rhea" id="RHEA:74524"/>
    </physiologicalReaction>
</comment>
<comment type="pathway">
    <text evidence="2">Secondary metabolite biosynthesis; terpenoid biosynthesis.</text>
</comment>
<comment type="similarity">
    <text evidence="4">Belongs to the class V-like SAM-binding methyltransferase superfamily.</text>
</comment>
<protein>
    <recommendedName>
        <fullName evidence="3">Methyltransferase flvH</fullName>
        <ecNumber evidence="2">2.1.1.-</ecNumber>
    </recommendedName>
    <alternativeName>
        <fullName evidence="3">Flavunoidine biosynthesis cluster protein H</fullName>
    </alternativeName>
</protein>
<gene>
    <name evidence="3" type="primary">flvH</name>
    <name type="ORF">AFLA_135480</name>
    <name type="ORF">G4B84_005467</name>
</gene>
<proteinExistence type="evidence at protein level"/>
<sequence>MSEFIPTWKQPSHPETLQVIKGATPYTASARSLVALPAGALFSKITTAIPAPKKTYTSVQTGPGLNIELMSDLVYCNHSCSPSLEFDMSTFEVRVSRDRPLSVGDELTFFYPSTEWDMVQPFNCFCGSQNCLGLIAGSQDMEASVLSRYWLNPHVKDLLAGKQMTVAPESTEEISLKA</sequence>
<accession>B8NHE3</accession>
<organism>
    <name type="scientific">Aspergillus flavus (strain ATCC 200026 / FGSC A1120 / IAM 13836 / NRRL 3357 / JCM 12722 / SRRC 167)</name>
    <dbReference type="NCBI Taxonomy" id="332952"/>
    <lineage>
        <taxon>Eukaryota</taxon>
        <taxon>Fungi</taxon>
        <taxon>Dikarya</taxon>
        <taxon>Ascomycota</taxon>
        <taxon>Pezizomycotina</taxon>
        <taxon>Eurotiomycetes</taxon>
        <taxon>Eurotiomycetidae</taxon>
        <taxon>Eurotiales</taxon>
        <taxon>Aspergillaceae</taxon>
        <taxon>Aspergillus</taxon>
        <taxon>Aspergillus subgen. Circumdati</taxon>
    </lineage>
</organism>
<feature type="chain" id="PRO_0000454484" description="Methyltransferase flvH">
    <location>
        <begin position="1"/>
        <end position="178"/>
    </location>
</feature>
<feature type="domain" description="Post-SET" evidence="1">
    <location>
        <begin position="120"/>
        <end position="136"/>
    </location>
</feature>
<feature type="binding site" evidence="1">
    <location>
        <position position="124"/>
    </location>
    <ligand>
        <name>Zn(2+)</name>
        <dbReference type="ChEBI" id="CHEBI:29105"/>
    </ligand>
</feature>
<feature type="binding site" evidence="1">
    <location>
        <position position="126"/>
    </location>
    <ligand>
        <name>Zn(2+)</name>
        <dbReference type="ChEBI" id="CHEBI:29105"/>
    </ligand>
</feature>
<feature type="binding site" evidence="1">
    <location>
        <position position="131"/>
    </location>
    <ligand>
        <name>Zn(2+)</name>
        <dbReference type="ChEBI" id="CHEBI:29105"/>
    </ligand>
</feature>
<dbReference type="EC" id="2.1.1.-" evidence="2"/>
<dbReference type="EMBL" id="EQ963478">
    <property type="protein sequence ID" value="EED50785.1"/>
    <property type="molecule type" value="Genomic_DNA"/>
</dbReference>
<dbReference type="EMBL" id="CP059868">
    <property type="protein sequence ID" value="QMW30132.1"/>
    <property type="molecule type" value="Genomic_DNA"/>
</dbReference>
<dbReference type="RefSeq" id="XP_002379561.1">
    <property type="nucleotide sequence ID" value="XM_002379520.1"/>
</dbReference>
<dbReference type="SMR" id="B8NHE3"/>
<dbReference type="STRING" id="332952.B8NHE3"/>
<dbReference type="EnsemblFungi" id="EED50785">
    <property type="protein sequence ID" value="EED50785"/>
    <property type="gene ID" value="AFLA_135480"/>
</dbReference>
<dbReference type="VEuPathDB" id="FungiDB:AFLA_005902"/>
<dbReference type="eggNOG" id="ENOG502S11B">
    <property type="taxonomic scope" value="Eukaryota"/>
</dbReference>
<dbReference type="HOGENOM" id="CLU_073382_3_0_1"/>
<dbReference type="OMA" id="QCLGWVD"/>
<dbReference type="UniPathway" id="UPA00213"/>
<dbReference type="GO" id="GO:0046872">
    <property type="term" value="F:metal ion binding"/>
    <property type="evidence" value="ECO:0007669"/>
    <property type="project" value="UniProtKB-KW"/>
</dbReference>
<dbReference type="GO" id="GO:0008168">
    <property type="term" value="F:methyltransferase activity"/>
    <property type="evidence" value="ECO:0007669"/>
    <property type="project" value="UniProtKB-KW"/>
</dbReference>
<dbReference type="GO" id="GO:0032259">
    <property type="term" value="P:methylation"/>
    <property type="evidence" value="ECO:0007669"/>
    <property type="project" value="UniProtKB-KW"/>
</dbReference>
<dbReference type="GO" id="GO:0016114">
    <property type="term" value="P:terpenoid biosynthetic process"/>
    <property type="evidence" value="ECO:0007669"/>
    <property type="project" value="UniProtKB-UniPathway"/>
</dbReference>
<dbReference type="Gene3D" id="2.170.270.10">
    <property type="entry name" value="SET domain"/>
    <property type="match status" value="1"/>
</dbReference>
<dbReference type="InterPro" id="IPR053201">
    <property type="entry name" value="Flavunoidine_N-MTase"/>
</dbReference>
<dbReference type="InterPro" id="IPR003616">
    <property type="entry name" value="Post-SET_dom"/>
</dbReference>
<dbReference type="InterPro" id="IPR046341">
    <property type="entry name" value="SET_dom_sf"/>
</dbReference>
<dbReference type="PANTHER" id="PTHR12350">
    <property type="entry name" value="HISTONE-LYSINE N-METHYLTRANSFERASE-RELATED"/>
    <property type="match status" value="1"/>
</dbReference>
<dbReference type="PANTHER" id="PTHR12350:SF19">
    <property type="entry name" value="SET DOMAIN-CONTAINING PROTEIN"/>
    <property type="match status" value="1"/>
</dbReference>
<dbReference type="SUPFAM" id="SSF82199">
    <property type="entry name" value="SET domain"/>
    <property type="match status" value="1"/>
</dbReference>
<dbReference type="PROSITE" id="PS50868">
    <property type="entry name" value="POST_SET"/>
    <property type="match status" value="1"/>
</dbReference>
<name>FLVH_ASPFN</name>